<keyword id="KW-0025">Alternative splicing</keyword>
<keyword id="KW-1003">Cell membrane</keyword>
<keyword id="KW-0165">Cleavage on pair of basic residues</keyword>
<keyword id="KW-0963">Cytoplasm</keyword>
<keyword id="KW-0206">Cytoskeleton</keyword>
<keyword id="KW-1015">Disulfide bond</keyword>
<keyword id="KW-0245">EGF-like domain</keyword>
<keyword id="KW-0325">Glycoprotein</keyword>
<keyword id="KW-0472">Membrane</keyword>
<keyword id="KW-0527">Neuropeptide</keyword>
<keyword id="KW-0539">Nucleus</keyword>
<keyword id="KW-0597">Phosphoprotein</keyword>
<keyword id="KW-1267">Proteomics identification</keyword>
<keyword id="KW-1185">Reference proteome</keyword>
<keyword id="KW-0677">Repeat</keyword>
<keyword id="KW-0678">Repressor</keyword>
<keyword id="KW-0346">Stress response</keyword>
<keyword id="KW-0804">Transcription</keyword>
<keyword id="KW-0805">Transcription regulation</keyword>
<keyword id="KW-0812">Transmembrane</keyword>
<keyword id="KW-1133">Transmembrane helix</keyword>
<comment type="function">
    <text evidence="1">Involved in neural development, regulating the establishment of proper connectivity within the nervous system. May function as a cellular signal transducer (By similarity).</text>
</comment>
<comment type="function">
    <molecule>Teneurin C-terminal-associated peptide</molecule>
    <text evidence="1">Plays a role in the regulation of neuroplasticity in the limbic system. Mediates a rapid reorganization of actin- and tubulin-based cytoskeleton elements with an increase in dendritic arborization and spine density formation of neurons in the hippocampus and amygdala. Induces BDNF transcription inhibition in neurons. Activates the mitogen-activated protein (MAP) kinase 2 (MEK2) and extracellular signal-regulated kinase (ERK) cascade. Also acts as a bioactive neuroprotective peptide on limbic neurons of the brain and regulates stress-induced behavior: attenuates alkalosis-associated necrotic cell death and the effects of corticotropin-releasing factor (CRF) on c-fos/FOS induction and on the reinstatement of cocaine seeking (By similarity).</text>
</comment>
<comment type="function">
    <molecule>Ten-1 intracellular domain</molecule>
    <text evidence="1">Induces gene transcription activation.</text>
</comment>
<comment type="subunit">
    <text evidence="2">Homodimer; disulfide-linked. Heterodimer with either TENM2 or TENM3. May also form heterodimer with TENM4. Ten-1 ICD interacts with SORBS1 (via third SH3 domain). Interacts with MBD1 (By similarity). Ten-1 ICD interacts with HINT1 (By similarity).</text>
</comment>
<comment type="subcellular location">
    <subcellularLocation>
        <location evidence="1">Cell membrane</location>
        <topology evidence="1">Single-pass membrane protein</topology>
    </subcellularLocation>
</comment>
<comment type="subcellular location">
    <molecule>Ten-1 intracellular domain</molecule>
    <subcellularLocation>
        <location evidence="1">Nucleus</location>
    </subcellularLocation>
    <subcellularLocation>
        <location evidence="1">Nucleus speckle</location>
    </subcellularLocation>
    <subcellularLocation>
        <location evidence="1">Nucleus matrix</location>
    </subcellularLocation>
    <subcellularLocation>
        <location evidence="1">Cytoplasm</location>
        <location evidence="1">Cytoskeleton</location>
    </subcellularLocation>
</comment>
<comment type="subcellular location">
    <molecule>Teneurin C-terminal-associated peptide</molecule>
    <subcellularLocation>
        <location evidence="1">Nucleus</location>
    </subcellularLocation>
    <subcellularLocation>
        <location evidence="1">Cytoplasm</location>
    </subcellularLocation>
    <subcellularLocation>
        <location evidence="1">Cell membrane</location>
    </subcellularLocation>
    <text evidence="1">Colocalizes with the dystroglycan complex at the cell membrane in hippocampal cells. Binds hippocampal cell membranes and is incorporated in the cytoplasm by endocytosis in a caveoli-dependent manner. Upon cell internalization is transported arround and in the nucleus (By similarity).</text>
</comment>
<comment type="alternative products">
    <event type="alternative splicing"/>
    <isoform>
        <id>Q9UKZ4-1</id>
        <name>1</name>
        <sequence type="displayed"/>
    </isoform>
    <isoform>
        <id>Q9UKZ4-2</id>
        <name>2</name>
        <sequence type="described" ref="VSP_043356"/>
    </isoform>
</comment>
<comment type="tissue specificity">
    <text evidence="7">Expressed in fetal brain.</text>
</comment>
<comment type="domain">
    <text>EGF-like domains 2 and 5 which have an odd number of cysteines might enable the formation of intermolecular disulfide bonds.</text>
</comment>
<comment type="domain">
    <text>Cytoplasmic proline-rich regions could serve as docking domains for intracellular SH3-containing proteins.</text>
</comment>
<comment type="PTM">
    <molecule>Teneurin C-terminal-associated peptide</molecule>
    <text evidence="1">Derives from the plasma membrane form by proteolytic processing. Further proteolytic cleavage may be generated (By similarity).</text>
</comment>
<comment type="miscellaneous">
    <molecule>Teneurin C-terminal-associated peptide</molecule>
    <text evidence="1">Binds to the plasma membrane and may be internalized by a receptor- and caveolae-mediated endocytosis manner to reach cytosolic compartments in a dynamin-dependent manner.</text>
</comment>
<comment type="similarity">
    <text evidence="11">Belongs to the tenascin family. Teneurin subfamily.</text>
</comment>
<name>TEN1_HUMAN</name>
<evidence type="ECO:0000250" key="1"/>
<evidence type="ECO:0000250" key="2">
    <source>
        <dbReference type="UniProtKB" id="Q9WTS4"/>
    </source>
</evidence>
<evidence type="ECO:0000255" key="3"/>
<evidence type="ECO:0000255" key="4">
    <source>
        <dbReference type="PROSITE-ProRule" id="PRU00076"/>
    </source>
</evidence>
<evidence type="ECO:0000255" key="5">
    <source>
        <dbReference type="PROSITE-ProRule" id="PRU00694"/>
    </source>
</evidence>
<evidence type="ECO:0000256" key="6">
    <source>
        <dbReference type="SAM" id="MobiDB-lite"/>
    </source>
</evidence>
<evidence type="ECO:0000269" key="7">
    <source>
    </source>
</evidence>
<evidence type="ECO:0000269" key="8">
    <source>
    </source>
</evidence>
<evidence type="ECO:0000269" key="9">
    <source>
    </source>
</evidence>
<evidence type="ECO:0000303" key="10">
    <source>
    </source>
</evidence>
<evidence type="ECO:0000305" key="11"/>
<evidence type="ECO:0007744" key="12">
    <source>
    </source>
</evidence>
<protein>
    <recommendedName>
        <fullName>Teneurin-1</fullName>
        <shortName>Ten-1</shortName>
    </recommendedName>
    <alternativeName>
        <fullName>Protein Odd Oz/ten-m homolog 1</fullName>
    </alternativeName>
    <alternativeName>
        <fullName>Tenascin-M1</fullName>
        <shortName>Ten-m1</shortName>
    </alternativeName>
    <alternativeName>
        <fullName>Teneurin transmembrane protein 1</fullName>
    </alternativeName>
    <component>
        <recommendedName>
            <fullName>Ten-1 intracellular domain</fullName>
            <shortName>IDten-1</shortName>
            <shortName>Ten-1 ICD</shortName>
        </recommendedName>
    </component>
    <component>
        <recommendedName>
            <fullName>Teneurin C-terminal-associated peptide</fullName>
            <shortName>TCPA-1</shortName>
        </recommendedName>
        <alternativeName>
            <fullName>Ten-1 extracellular domain</fullName>
            <shortName>Ten-1 ECD</shortName>
        </alternativeName>
    </component>
</protein>
<feature type="chain" id="PRO_0000259498" description="Teneurin-1">
    <location>
        <begin position="1"/>
        <end position="2725"/>
    </location>
</feature>
<feature type="chain" id="PRO_0000421005" description="Ten-1 intracellular domain" evidence="1">
    <location>
        <begin position="1"/>
        <end status="unknown"/>
    </location>
</feature>
<feature type="chain" id="PRO_0000421006" description="Teneurin C-terminal-associated peptide" evidence="1">
    <location>
        <begin position="2596"/>
        <end position="2725"/>
    </location>
</feature>
<feature type="topological domain" description="Cytoplasmic" evidence="3">
    <location>
        <begin position="1"/>
        <end position="324"/>
    </location>
</feature>
<feature type="transmembrane region" description="Helical" evidence="3">
    <location>
        <begin position="325"/>
        <end position="345"/>
    </location>
</feature>
<feature type="topological domain" description="Extracellular" evidence="3">
    <location>
        <begin position="346"/>
        <end position="2725"/>
    </location>
</feature>
<feature type="domain" description="Teneurin N-terminal" evidence="5">
    <location>
        <begin position="1"/>
        <end position="318"/>
    </location>
</feature>
<feature type="domain" description="EGF-like 1" evidence="4">
    <location>
        <begin position="528"/>
        <end position="559"/>
    </location>
</feature>
<feature type="domain" description="EGF-like 2" evidence="4">
    <location>
        <begin position="560"/>
        <end position="591"/>
    </location>
</feature>
<feature type="domain" description="EGF-like 3" evidence="4">
    <location>
        <begin position="592"/>
        <end position="624"/>
    </location>
</feature>
<feature type="domain" description="EGF-like 4" evidence="4">
    <location>
        <begin position="625"/>
        <end position="657"/>
    </location>
</feature>
<feature type="domain" description="EGF-like 5" evidence="4">
    <location>
        <begin position="658"/>
        <end position="691"/>
    </location>
</feature>
<feature type="domain" description="EGF-like 6" evidence="4">
    <location>
        <begin position="692"/>
        <end position="721"/>
    </location>
</feature>
<feature type="domain" description="EGF-like 7" evidence="4">
    <location>
        <begin position="722"/>
        <end position="753"/>
    </location>
</feature>
<feature type="domain" description="EGF-like 8" evidence="4">
    <location>
        <begin position="761"/>
        <end position="796"/>
    </location>
</feature>
<feature type="repeat" description="NHL 1">
    <location>
        <begin position="1194"/>
        <end position="1219"/>
    </location>
</feature>
<feature type="repeat" description="NHL 2">
    <location>
        <begin position="1292"/>
        <end position="1336"/>
    </location>
</feature>
<feature type="repeat" description="NHL 3">
    <location>
        <begin position="1351"/>
        <end position="1402"/>
    </location>
</feature>
<feature type="repeat" description="NHL 4">
    <location>
        <begin position="1414"/>
        <end position="1458"/>
    </location>
</feature>
<feature type="repeat" description="NHL 5">
    <location>
        <begin position="1481"/>
        <end position="1524"/>
    </location>
</feature>
<feature type="repeat" description="YD 1">
    <location>
        <begin position="1534"/>
        <end position="1553"/>
    </location>
</feature>
<feature type="repeat" description="YD 2">
    <location>
        <begin position="1570"/>
        <end position="1590"/>
    </location>
</feature>
<feature type="repeat" description="YD 3">
    <location>
        <begin position="1608"/>
        <end position="1632"/>
    </location>
</feature>
<feature type="repeat" description="YD 4">
    <location>
        <begin position="1633"/>
        <end position="1654"/>
    </location>
</feature>
<feature type="repeat" description="YD 5">
    <location>
        <begin position="1655"/>
        <end position="1675"/>
    </location>
</feature>
<feature type="repeat" description="YD 6">
    <location>
        <begin position="1845"/>
        <end position="1864"/>
    </location>
</feature>
<feature type="repeat" description="YD 7">
    <location>
        <begin position="1865"/>
        <end position="1885"/>
    </location>
</feature>
<feature type="repeat" description="YD 8">
    <location>
        <begin position="1886"/>
        <end position="1904"/>
    </location>
</feature>
<feature type="repeat" description="YD 9">
    <location>
        <begin position="1905"/>
        <end position="1925"/>
    </location>
</feature>
<feature type="repeat" description="YD 10">
    <location>
        <begin position="1933"/>
        <end position="1949"/>
    </location>
</feature>
<feature type="repeat" description="YD 11">
    <location>
        <begin position="1950"/>
        <end position="1969"/>
    </location>
</feature>
<feature type="repeat" description="YD 12">
    <location>
        <begin position="1970"/>
        <end position="1989"/>
    </location>
</feature>
<feature type="repeat" description="YD 13">
    <location>
        <begin position="1992"/>
        <end position="2012"/>
    </location>
</feature>
<feature type="repeat" description="YD 14">
    <location>
        <begin position="2015"/>
        <end position="2035"/>
    </location>
</feature>
<feature type="repeat" description="YD 15">
    <location>
        <begin position="2085"/>
        <end position="2105"/>
    </location>
</feature>
<feature type="repeat" description="YD 16">
    <location>
        <begin position="2113"/>
        <end position="2133"/>
    </location>
</feature>
<feature type="repeat" description="YD 17">
    <location>
        <begin position="2153"/>
        <end position="2173"/>
    </location>
</feature>
<feature type="repeat" description="YD 18">
    <location>
        <begin position="2174"/>
        <end position="2194"/>
    </location>
</feature>
<feature type="repeat" description="YD 19">
    <location>
        <begin position="2196"/>
        <end position="2216"/>
    </location>
</feature>
<feature type="repeat" description="YD 20">
    <location>
        <begin position="2228"/>
        <end position="2248"/>
    </location>
</feature>
<feature type="repeat" description="YD 21">
    <location>
        <begin position="2250"/>
        <end position="2270"/>
    </location>
</feature>
<feature type="repeat" description="YD 22">
    <location>
        <begin position="2296"/>
        <end position="2313"/>
    </location>
</feature>
<feature type="repeat" description="YD 23">
    <location>
        <begin position="2314"/>
        <end position="2337"/>
    </location>
</feature>
<feature type="region of interest" description="Disordered" evidence="6">
    <location>
        <begin position="1"/>
        <end position="48"/>
    </location>
</feature>
<feature type="region of interest" description="Disordered" evidence="6">
    <location>
        <begin position="174"/>
        <end position="241"/>
    </location>
</feature>
<feature type="short sequence motif" description="Nuclear localization signal (NLS)" evidence="1">
    <location>
        <begin position="62"/>
        <end position="65"/>
    </location>
</feature>
<feature type="short sequence motif" description="Required for interaction with SORBS1 (Ten-1 ICD form)" evidence="1">
    <location>
        <begin position="290"/>
        <end position="297"/>
    </location>
</feature>
<feature type="compositionally biased region" description="Polar residues" evidence="6">
    <location>
        <begin position="174"/>
        <end position="189"/>
    </location>
</feature>
<feature type="compositionally biased region" description="Pro residues" evidence="6">
    <location>
        <begin position="192"/>
        <end position="201"/>
    </location>
</feature>
<feature type="site" description="Cleavage" evidence="11">
    <location>
        <begin position="2595"/>
        <end position="2596"/>
    </location>
</feature>
<feature type="modified residue" description="Phosphoserine" evidence="2">
    <location>
        <position position="105"/>
    </location>
</feature>
<feature type="modified residue" description="Phosphothreonine" evidence="2">
    <location>
        <position position="109"/>
    </location>
</feature>
<feature type="modified residue" description="Phosphoserine" evidence="2">
    <location>
        <position position="116"/>
    </location>
</feature>
<feature type="modified residue" description="Phosphoserine" evidence="12">
    <location>
        <position position="2580"/>
    </location>
</feature>
<feature type="glycosylation site" description="N-linked (GlcNAc...) asparagine" evidence="3">
    <location>
        <position position="433"/>
    </location>
</feature>
<feature type="glycosylation site" description="N-linked (GlcNAc...) asparagine" evidence="3">
    <location>
        <position position="905"/>
    </location>
</feature>
<feature type="glycosylation site" description="N-linked (GlcNAc...) asparagine" evidence="3">
    <location>
        <position position="1084"/>
    </location>
</feature>
<feature type="glycosylation site" description="N-linked (GlcNAc...) asparagine" evidence="3">
    <location>
        <position position="1550"/>
    </location>
</feature>
<feature type="glycosylation site" description="N-linked (GlcNAc...) asparagine" evidence="3">
    <location>
        <position position="1567"/>
    </location>
</feature>
<feature type="glycosylation site" description="N-linked (GlcNAc...) asparagine" evidence="3">
    <location>
        <position position="1663"/>
    </location>
</feature>
<feature type="glycosylation site" description="N-linked (GlcNAc...) asparagine" evidence="3">
    <location>
        <position position="1699"/>
    </location>
</feature>
<feature type="glycosylation site" description="N-linked (GlcNAc...) asparagine" evidence="3">
    <location>
        <position position="1757"/>
    </location>
</feature>
<feature type="glycosylation site" description="N-linked (GlcNAc...) asparagine" evidence="3">
    <location>
        <position position="1781"/>
    </location>
</feature>
<feature type="glycosylation site" description="N-linked (GlcNAc...) asparagine" evidence="3">
    <location>
        <position position="1842"/>
    </location>
</feature>
<feature type="glycosylation site" description="N-linked (GlcNAc...) asparagine" evidence="3">
    <location>
        <position position="2145"/>
    </location>
</feature>
<feature type="glycosylation site" description="N-linked (GlcNAc...) asparagine" evidence="3">
    <location>
        <position position="2285"/>
    </location>
</feature>
<feature type="glycosylation site" description="N-linked (GlcNAc...) asparagine" evidence="3">
    <location>
        <position position="2602"/>
    </location>
</feature>
<feature type="disulfide bond" evidence="4">
    <location>
        <begin position="532"/>
        <end position="542"/>
    </location>
</feature>
<feature type="disulfide bond" evidence="4">
    <location>
        <begin position="536"/>
        <end position="547"/>
    </location>
</feature>
<feature type="disulfide bond" evidence="4">
    <location>
        <begin position="549"/>
        <end position="558"/>
    </location>
</feature>
<feature type="disulfide bond" evidence="4">
    <location>
        <begin position="567"/>
        <end position="578"/>
    </location>
</feature>
<feature type="disulfide bond" evidence="4">
    <location>
        <begin position="580"/>
        <end position="589"/>
    </location>
</feature>
<feature type="disulfide bond" evidence="4">
    <location>
        <begin position="596"/>
        <end position="607"/>
    </location>
</feature>
<feature type="disulfide bond" evidence="4">
    <location>
        <begin position="601"/>
        <end position="612"/>
    </location>
</feature>
<feature type="disulfide bond" evidence="4">
    <location>
        <begin position="614"/>
        <end position="623"/>
    </location>
</feature>
<feature type="disulfide bond" evidence="4">
    <location>
        <begin position="628"/>
        <end position="639"/>
    </location>
</feature>
<feature type="disulfide bond" evidence="4">
    <location>
        <begin position="633"/>
        <end position="644"/>
    </location>
</feature>
<feature type="disulfide bond" evidence="4">
    <location>
        <begin position="646"/>
        <end position="655"/>
    </location>
</feature>
<feature type="disulfide bond" evidence="4">
    <location>
        <begin position="666"/>
        <end position="679"/>
    </location>
</feature>
<feature type="disulfide bond" evidence="4">
    <location>
        <begin position="681"/>
        <end position="690"/>
    </location>
</feature>
<feature type="disulfide bond" evidence="4">
    <location>
        <begin position="695"/>
        <end position="705"/>
    </location>
</feature>
<feature type="disulfide bond" evidence="4">
    <location>
        <begin position="699"/>
        <end position="710"/>
    </location>
</feature>
<feature type="disulfide bond" evidence="4">
    <location>
        <begin position="712"/>
        <end position="721"/>
    </location>
</feature>
<feature type="disulfide bond" evidence="4">
    <location>
        <begin position="726"/>
        <end position="736"/>
    </location>
</feature>
<feature type="disulfide bond" evidence="4">
    <location>
        <begin position="730"/>
        <end position="741"/>
    </location>
</feature>
<feature type="disulfide bond" evidence="4">
    <location>
        <begin position="743"/>
        <end position="752"/>
    </location>
</feature>
<feature type="disulfide bond" evidence="4">
    <location>
        <begin position="765"/>
        <end position="775"/>
    </location>
</feature>
<feature type="disulfide bond" evidence="4">
    <location>
        <begin position="769"/>
        <end position="784"/>
    </location>
</feature>
<feature type="disulfide bond" evidence="4">
    <location>
        <begin position="786"/>
        <end position="795"/>
    </location>
</feature>
<feature type="splice variant" id="VSP_043356" description="In isoform 2." evidence="10">
    <original>L</original>
    <variation>LRNRDTRH</variation>
    <location>
        <position position="1231"/>
    </location>
</feature>
<feature type="sequence variant" id="VAR_053792" description="In dbSNP:rs36065191.">
    <original>Y</original>
    <variation>H</variation>
    <location>
        <position position="40"/>
    </location>
</feature>
<feature type="sequence variant" id="VAR_076255" description="In dbSNP:rs139486546." evidence="9">
    <original>A</original>
    <variation>D</variation>
    <location>
        <position position="174"/>
    </location>
</feature>
<feature type="sequence variant" id="VAR_036596" description="In a breast cancer sample; somatic mutation." evidence="8">
    <original>L</original>
    <variation>F</variation>
    <location>
        <position position="342"/>
    </location>
</feature>
<feature type="sequence variant" id="VAR_053793" description="In dbSNP:rs2213591.">
    <original>M</original>
    <variation>T</variation>
    <location>
        <position position="371"/>
    </location>
</feature>
<feature type="sequence variant" id="VAR_053794" description="In dbSNP:rs16999334.">
    <original>M</original>
    <variation>V</variation>
    <location>
        <position position="632"/>
    </location>
</feature>
<feature type="sequence variant" id="VAR_053795" description="In dbSNP:rs6649271.">
    <original>K</original>
    <variation>E</variation>
    <location>
        <position position="641"/>
    </location>
</feature>
<feature type="sequence variant" id="VAR_036597" description="In a breast cancer sample; somatic mutation; dbSNP:rs137882910." evidence="8">
    <original>V</original>
    <variation>I</variation>
    <location>
        <position position="1216"/>
    </location>
</feature>
<feature type="sequence variant" id="VAR_036598" description="In a colorectal cancer sample; somatic mutation." evidence="8">
    <original>F</original>
    <variation>V</variation>
    <location>
        <position position="1482"/>
    </location>
</feature>
<feature type="sequence variant" id="VAR_036599" description="In a breast cancer sample; somatic mutation." evidence="8">
    <original>Q</original>
    <variation>H</variation>
    <location>
        <position position="2235"/>
    </location>
</feature>
<feature type="sequence variant" id="VAR_036600" description="In a colorectal cancer sample; somatic mutation." evidence="8">
    <original>L</original>
    <variation>F</variation>
    <location>
        <position position="2396"/>
    </location>
</feature>
<feature type="sequence conflict" description="In Ref. 1; AAF04723." evidence="11" ref="1">
    <original>F</original>
    <variation>S</variation>
    <location>
        <position position="261"/>
    </location>
</feature>
<feature type="sequence conflict" description="In Ref. 1; AAF04723." evidence="11" ref="1">
    <original>G</original>
    <variation>D</variation>
    <location>
        <position position="1135"/>
    </location>
</feature>
<feature type="sequence conflict" description="In Ref. 1; AAF04723." evidence="11" ref="1">
    <original>L</original>
    <variation>P</variation>
    <location>
        <position position="1628"/>
    </location>
</feature>
<feature type="sequence conflict" description="In Ref. 1; AAF04723." evidence="11" ref="1">
    <original>P</original>
    <variation>S</variation>
    <location>
        <position position="1908"/>
    </location>
</feature>
<feature type="sequence conflict" description="In Ref. 1; AAF04723." evidence="11" ref="1">
    <original>MVICD</original>
    <variation>HGNMC</variation>
    <location>
        <begin position="2133"/>
        <end position="2137"/>
    </location>
</feature>
<feature type="sequence conflict" description="In Ref. 1; AAF04723." evidence="11" ref="1">
    <original>N</original>
    <variation>D</variation>
    <location>
        <position position="2179"/>
    </location>
</feature>
<feature type="sequence conflict" description="In Ref. 1; AAF04723." evidence="11" ref="1">
    <original>YADLT</original>
    <variation>VDATA</variation>
    <location>
        <begin position="2271"/>
        <end position="2275"/>
    </location>
</feature>
<feature type="sequence conflict" description="In Ref. 1; AAF04723." evidence="11" ref="1">
    <original>PN</original>
    <variation>AY</variation>
    <location>
        <begin position="2388"/>
        <end position="2389"/>
    </location>
</feature>
<feature type="sequence conflict" description="In Ref. 1; AAF04723." evidence="11" ref="1">
    <original>V</original>
    <variation>L</variation>
    <location>
        <position position="2611"/>
    </location>
</feature>
<gene>
    <name type="primary">TENM1</name>
    <name type="synonym">ODZ1</name>
    <name type="synonym">TNM1</name>
</gene>
<sequence>MEQTDCKPYQPLPKVKHEMDLAYTSSSDESEDGRKPRQSYNSRETLHEYNQELRMNYNSQSRKRKEVEKSTQEMEFCETSHTLCSGYQTDMHSVSRHGYQLEMGSDVDTETEGAASPDHALRMWIRGMKSEHSSCLSSRANSALSLTDTDHERKSDGENGFKFSPVCCDMEAQAGSTQDVQSSPHNQFTFRPLPPPPPPPHACTCARKPPPAADSLQRRSMTTRSQPSPAAPAPPTSTQDSVHLHNSWVLNSNIPLETRHFLFKHGSGSSAIFSAASQNYPLTSNTVYSPPPRPLPRSTFSRPAFTFNKPYRCCNWKCTALSATAITVTLALLLAYVIAVHLFGLTWQLQPVEGELYANGVSKGNRGTESMDTTYSPIGGKVSDKSEKKVFQKGRAIDTGEVDIGAQVMQTIPPGLFWRFQITIHHPIYLKFNISLAKDSLLGIYGRRNIPPTHTQFDFVKLMDGKQLVKQDSKGSDDTQHSPRNLILTSLQETGFIEYMDQGPWYLAFYNDGKKMEQVFVLTTAIEIMDDCSTNCNGNGECISGHCHCFPGFLGPDCARDSCPVLCGGNGEYEKGHCVCRHGWKGPECDVPEEQCIDPTCFGHGTCIMGVCICVPGYKGEICEEEDCLDPMCSNHGICVKGECHCSTGWGGVNCETPLPVCQEQCSGHGTFLLDAGVCSCDPKWTGSDCSTELCTMECGSHGVCSRGICQCEEGWVGPTCEERSCHSHCTEHGQCKDGKCECSPGWEGDHCTIAHYLDAVRDGCPGLCFGNGRCTLDQNGWHCVCQVGWSGTGCNVVMEMLCGDNLDNDGDGLTDCVDPDCCQQSNCYISPLCQGSPDPLDLIQQSQTLFSQHTSRLFYDRIKFLIGKDSTHVIPPEVSFDSRRACVIRGQVVAIDGTPLVGVNVSFLHHSDYGFTISRQDGSFDLVAIGGISVILIFDRSPFLPEKRTLWLPWNQFIVVEKVTMQRVVSDPPSCDISNFISPNPIVLPSPLTSFGGSCPERGTIVPELQVVQEEIPIPSSFVRLSYLSSRTPGYKTLLRILLTHSTIPVGMIKVHLTVAVEGRLTQKWFPAAINLVYTFAWNKTDIYGQKVWGLAEALVSVGYEYETCPDFILWEQRTVVLQGFEMDASNLGGWSLNKHHILNPQSGIIHKGNGENMFISQQPPVISTIMGNGHQRSVACTNCNGPAHNNKLFAPVALASGPDGSVYVGDFNFVRRIFPSGNSVSILELSTSPAHKYYLAMDPVSESLYLSDTNTRKVYKLKSLVETKDLSKNFEVVAGTGDQCLPFDQSHCGDGGRASEASLNSPRGITVDRHGFIYFVDGTMIRKIDENAVITTVIGSNGLTSTQPLSCDSGMDITQVRLEWPTDLAVNPMDNSLYVLDNNIVLQISENRRVRIIAGRPIHCQVPGIDHFLVSKVAIHSTLESARAISVSHSGLLFIAETDERKVNRIQQVTTNGEIYIIAGAPTDCDCKIDPNCDCFSGDGGYAKDAKMKAPSSLAVSPDGTLYVADLGNVRIRTISRNQAHLNDMNIYEIASPADQELYQFTVNGTHLHTLNLITRDYVYNFTYNSEGDLGAITSSNGNSVHIRRDAGGMPLWLVVPGGQVYWLTISSNGVLKRVSAQGYNLALMTYPGNTGLLATKSNENGWTTVYEYDPEGHLTNATFPTGEVSSFHSDLEKLTKVELDTSNRENVLMSTNLTATSTIYILKQENTQSTYRVNPDGSLRVTFASGMEIGLSSEPHILAGAVNPTLGKCNISLPGEHNANLIEWRQRKEQNKGNVSAFERRLRAHNRNLLSIDFDHITRTGKIYDDHRKFTLRILYDQTGRPILWSPVSRYNEVNITYSPSGLVTFIQRGTWNEKMEYDQSGKIISRTWADGKIWSYTYLEKSVMLLLHSQRRYIFEYDQPDCLLSVTMPSMVRHSLQTMLSVGYYRNIYTPPDSSTSFIQDYSRDGRLLQTLHLGTGRRVLYKYTKQARLSEVLYDTTQVTLTYEESSGVIKTIHLMHDGFICTIRYRQTGPLIGRQIFRFSEEGLVNARFDYSYNNFRVTSMQAVINETPLPIDLYRYVDVSGRTEQFGKFSVINYDLNQVITTTVMKHTKIFSANGQVIEVQYEILKAIAYWMTIQYDNVGRMVICDIRVGVDANITRYFYEYDADGQLQTVSVNDKTQWRYSYDLNGNINLLSHGKSARLTPLRYDLRDRITRLGEIQYKMDEDGFLRQRGNDIFEYNSNGLLQKAYNKASGWTVQYYYDGLGRRVASKSSLGQHLQFFYADLTNPIRVTHLYNHTSSEITSLYYDLQGHLIAMELSSGEEYYVACDNTGTPLAVFSSRGQVIKEILYTPYGDIYHDTYPDFQVIIGFHGGLYDFLTKLVHLGQRDYDVVAGRWTTPNHHIWKQLNLLPKPFNLYSFENNYPVGKIQDVAKYTTDIRSWLELFGFQLHNVLPGFPKPELENLELTYELLRLQTKTQEWDPGKTILGIQCELQKQLRNFISLDQLPMTPRYNDGRCLEGGKQPRFAAVPSVFGKGIKFAIKDGIVTADIIGVANEDSRRLAAILNNAHYLENLHFTIEGRDTHYFIKLGSLEEDLVLIGNTGGRRILENGVNVTVSQMTSVLNGRTRRFADIQLQHGALCFNIRYGTTVEEEKNHVLEIARQRAVAQAWTKEQRRLQEGEEGIRAWTEGEKQQLLSTGRVQGYDGYFVLSVEQYLELSDSANNIHFMRQSEIGRR</sequence>
<organism>
    <name type="scientific">Homo sapiens</name>
    <name type="common">Human</name>
    <dbReference type="NCBI Taxonomy" id="9606"/>
    <lineage>
        <taxon>Eukaryota</taxon>
        <taxon>Metazoa</taxon>
        <taxon>Chordata</taxon>
        <taxon>Craniata</taxon>
        <taxon>Vertebrata</taxon>
        <taxon>Euteleostomi</taxon>
        <taxon>Mammalia</taxon>
        <taxon>Eutheria</taxon>
        <taxon>Euarchontoglires</taxon>
        <taxon>Primates</taxon>
        <taxon>Haplorrhini</taxon>
        <taxon>Catarrhini</taxon>
        <taxon>Hominidae</taxon>
        <taxon>Homo</taxon>
    </lineage>
</organism>
<proteinExistence type="evidence at protein level"/>
<accession>Q9UKZ4</accession>
<accession>B2RTR5</accession>
<accession>Q5JZ17</accession>
<reference key="1">
    <citation type="journal article" date="1999" name="Hum. Mol. Genet.">
        <title>Epstein-Barr virus-negative boys with non-Hodgkin lymphoma are mutated in the SH2D1A gene, as are patients with X-linked lymphoproliferative disease (XLP).</title>
        <authorList>
            <person name="Brandau O."/>
            <person name="Schuster V."/>
            <person name="Weiss M."/>
            <person name="Hellebrand H."/>
            <person name="Fink F.M."/>
            <person name="Kreczy A."/>
            <person name="Friedrich W."/>
            <person name="Strahm B."/>
            <person name="Niemeyer C."/>
            <person name="Belohradsky B.H."/>
            <person name="Meindl A."/>
        </authorList>
    </citation>
    <scope>NUCLEOTIDE SEQUENCE [MRNA] (ISOFORM 1)</scope>
</reference>
<reference key="2">
    <citation type="journal article" date="2005" name="Nature">
        <title>The DNA sequence of the human X chromosome.</title>
        <authorList>
            <person name="Ross M.T."/>
            <person name="Grafham D.V."/>
            <person name="Coffey A.J."/>
            <person name="Scherer S."/>
            <person name="McLay K."/>
            <person name="Muzny D."/>
            <person name="Platzer M."/>
            <person name="Howell G.R."/>
            <person name="Burrows C."/>
            <person name="Bird C.P."/>
            <person name="Frankish A."/>
            <person name="Lovell F.L."/>
            <person name="Howe K.L."/>
            <person name="Ashurst J.L."/>
            <person name="Fulton R.S."/>
            <person name="Sudbrak R."/>
            <person name="Wen G."/>
            <person name="Jones M.C."/>
            <person name="Hurles M.E."/>
            <person name="Andrews T.D."/>
            <person name="Scott C.E."/>
            <person name="Searle S."/>
            <person name="Ramser J."/>
            <person name="Whittaker A."/>
            <person name="Deadman R."/>
            <person name="Carter N.P."/>
            <person name="Hunt S.E."/>
            <person name="Chen R."/>
            <person name="Cree A."/>
            <person name="Gunaratne P."/>
            <person name="Havlak P."/>
            <person name="Hodgson A."/>
            <person name="Metzker M.L."/>
            <person name="Richards S."/>
            <person name="Scott G."/>
            <person name="Steffen D."/>
            <person name="Sodergren E."/>
            <person name="Wheeler D.A."/>
            <person name="Worley K.C."/>
            <person name="Ainscough R."/>
            <person name="Ambrose K.D."/>
            <person name="Ansari-Lari M.A."/>
            <person name="Aradhya S."/>
            <person name="Ashwell R.I."/>
            <person name="Babbage A.K."/>
            <person name="Bagguley C.L."/>
            <person name="Ballabio A."/>
            <person name="Banerjee R."/>
            <person name="Barker G.E."/>
            <person name="Barlow K.F."/>
            <person name="Barrett I.P."/>
            <person name="Bates K.N."/>
            <person name="Beare D.M."/>
            <person name="Beasley H."/>
            <person name="Beasley O."/>
            <person name="Beck A."/>
            <person name="Bethel G."/>
            <person name="Blechschmidt K."/>
            <person name="Brady N."/>
            <person name="Bray-Allen S."/>
            <person name="Bridgeman A.M."/>
            <person name="Brown A.J."/>
            <person name="Brown M.J."/>
            <person name="Bonnin D."/>
            <person name="Bruford E.A."/>
            <person name="Buhay C."/>
            <person name="Burch P."/>
            <person name="Burford D."/>
            <person name="Burgess J."/>
            <person name="Burrill W."/>
            <person name="Burton J."/>
            <person name="Bye J.M."/>
            <person name="Carder C."/>
            <person name="Carrel L."/>
            <person name="Chako J."/>
            <person name="Chapman J.C."/>
            <person name="Chavez D."/>
            <person name="Chen E."/>
            <person name="Chen G."/>
            <person name="Chen Y."/>
            <person name="Chen Z."/>
            <person name="Chinault C."/>
            <person name="Ciccodicola A."/>
            <person name="Clark S.Y."/>
            <person name="Clarke G."/>
            <person name="Clee C.M."/>
            <person name="Clegg S."/>
            <person name="Clerc-Blankenburg K."/>
            <person name="Clifford K."/>
            <person name="Cobley V."/>
            <person name="Cole C.G."/>
            <person name="Conquer J.S."/>
            <person name="Corby N."/>
            <person name="Connor R.E."/>
            <person name="David R."/>
            <person name="Davies J."/>
            <person name="Davis C."/>
            <person name="Davis J."/>
            <person name="Delgado O."/>
            <person name="Deshazo D."/>
            <person name="Dhami P."/>
            <person name="Ding Y."/>
            <person name="Dinh H."/>
            <person name="Dodsworth S."/>
            <person name="Draper H."/>
            <person name="Dugan-Rocha S."/>
            <person name="Dunham A."/>
            <person name="Dunn M."/>
            <person name="Durbin K.J."/>
            <person name="Dutta I."/>
            <person name="Eades T."/>
            <person name="Ellwood M."/>
            <person name="Emery-Cohen A."/>
            <person name="Errington H."/>
            <person name="Evans K.L."/>
            <person name="Faulkner L."/>
            <person name="Francis F."/>
            <person name="Frankland J."/>
            <person name="Fraser A.E."/>
            <person name="Galgoczy P."/>
            <person name="Gilbert J."/>
            <person name="Gill R."/>
            <person name="Gloeckner G."/>
            <person name="Gregory S.G."/>
            <person name="Gribble S."/>
            <person name="Griffiths C."/>
            <person name="Grocock R."/>
            <person name="Gu Y."/>
            <person name="Gwilliam R."/>
            <person name="Hamilton C."/>
            <person name="Hart E.A."/>
            <person name="Hawes A."/>
            <person name="Heath P.D."/>
            <person name="Heitmann K."/>
            <person name="Hennig S."/>
            <person name="Hernandez J."/>
            <person name="Hinzmann B."/>
            <person name="Ho S."/>
            <person name="Hoffs M."/>
            <person name="Howden P.J."/>
            <person name="Huckle E.J."/>
            <person name="Hume J."/>
            <person name="Hunt P.J."/>
            <person name="Hunt A.R."/>
            <person name="Isherwood J."/>
            <person name="Jacob L."/>
            <person name="Johnson D."/>
            <person name="Jones S."/>
            <person name="de Jong P.J."/>
            <person name="Joseph S.S."/>
            <person name="Keenan S."/>
            <person name="Kelly S."/>
            <person name="Kershaw J.K."/>
            <person name="Khan Z."/>
            <person name="Kioschis P."/>
            <person name="Klages S."/>
            <person name="Knights A.J."/>
            <person name="Kosiura A."/>
            <person name="Kovar-Smith C."/>
            <person name="Laird G.K."/>
            <person name="Langford C."/>
            <person name="Lawlor S."/>
            <person name="Leversha M."/>
            <person name="Lewis L."/>
            <person name="Liu W."/>
            <person name="Lloyd C."/>
            <person name="Lloyd D.M."/>
            <person name="Loulseged H."/>
            <person name="Loveland J.E."/>
            <person name="Lovell J.D."/>
            <person name="Lozado R."/>
            <person name="Lu J."/>
            <person name="Lyne R."/>
            <person name="Ma J."/>
            <person name="Maheshwari M."/>
            <person name="Matthews L.H."/>
            <person name="McDowall J."/>
            <person name="McLaren S."/>
            <person name="McMurray A."/>
            <person name="Meidl P."/>
            <person name="Meitinger T."/>
            <person name="Milne S."/>
            <person name="Miner G."/>
            <person name="Mistry S.L."/>
            <person name="Morgan M."/>
            <person name="Morris S."/>
            <person name="Mueller I."/>
            <person name="Mullikin J.C."/>
            <person name="Nguyen N."/>
            <person name="Nordsiek G."/>
            <person name="Nyakatura G."/>
            <person name="O'dell C.N."/>
            <person name="Okwuonu G."/>
            <person name="Palmer S."/>
            <person name="Pandian R."/>
            <person name="Parker D."/>
            <person name="Parrish J."/>
            <person name="Pasternak S."/>
            <person name="Patel D."/>
            <person name="Pearce A.V."/>
            <person name="Pearson D.M."/>
            <person name="Pelan S.E."/>
            <person name="Perez L."/>
            <person name="Porter K.M."/>
            <person name="Ramsey Y."/>
            <person name="Reichwald K."/>
            <person name="Rhodes S."/>
            <person name="Ridler K.A."/>
            <person name="Schlessinger D."/>
            <person name="Schueler M.G."/>
            <person name="Sehra H.K."/>
            <person name="Shaw-Smith C."/>
            <person name="Shen H."/>
            <person name="Sheridan E.M."/>
            <person name="Shownkeen R."/>
            <person name="Skuce C.D."/>
            <person name="Smith M.L."/>
            <person name="Sotheran E.C."/>
            <person name="Steingruber H.E."/>
            <person name="Steward C.A."/>
            <person name="Storey R."/>
            <person name="Swann R.M."/>
            <person name="Swarbreck D."/>
            <person name="Tabor P.E."/>
            <person name="Taudien S."/>
            <person name="Taylor T."/>
            <person name="Teague B."/>
            <person name="Thomas K."/>
            <person name="Thorpe A."/>
            <person name="Timms K."/>
            <person name="Tracey A."/>
            <person name="Trevanion S."/>
            <person name="Tromans A.C."/>
            <person name="d'Urso M."/>
            <person name="Verduzco D."/>
            <person name="Villasana D."/>
            <person name="Waldron L."/>
            <person name="Wall M."/>
            <person name="Wang Q."/>
            <person name="Warren J."/>
            <person name="Warry G.L."/>
            <person name="Wei X."/>
            <person name="West A."/>
            <person name="Whitehead S.L."/>
            <person name="Whiteley M.N."/>
            <person name="Wilkinson J.E."/>
            <person name="Willey D.L."/>
            <person name="Williams G."/>
            <person name="Williams L."/>
            <person name="Williamson A."/>
            <person name="Williamson H."/>
            <person name="Wilming L."/>
            <person name="Woodmansey R.L."/>
            <person name="Wray P.W."/>
            <person name="Yen J."/>
            <person name="Zhang J."/>
            <person name="Zhou J."/>
            <person name="Zoghbi H."/>
            <person name="Zorilla S."/>
            <person name="Buck D."/>
            <person name="Reinhardt R."/>
            <person name="Poustka A."/>
            <person name="Rosenthal A."/>
            <person name="Lehrach H."/>
            <person name="Meindl A."/>
            <person name="Minx P.J."/>
            <person name="Hillier L.W."/>
            <person name="Willard H.F."/>
            <person name="Wilson R.K."/>
            <person name="Waterston R.H."/>
            <person name="Rice C.M."/>
            <person name="Vaudin M."/>
            <person name="Coulson A."/>
            <person name="Nelson D.L."/>
            <person name="Weinstock G."/>
            <person name="Sulston J.E."/>
            <person name="Durbin R.M."/>
            <person name="Hubbard T."/>
            <person name="Gibbs R.A."/>
            <person name="Beck S."/>
            <person name="Rogers J."/>
            <person name="Bentley D.R."/>
        </authorList>
    </citation>
    <scope>NUCLEOTIDE SEQUENCE [LARGE SCALE GENOMIC DNA]</scope>
</reference>
<reference key="3">
    <citation type="journal article" date="2004" name="Genome Res.">
        <title>The status, quality, and expansion of the NIH full-length cDNA project: the Mammalian Gene Collection (MGC).</title>
        <authorList>
            <consortium name="The MGC Project Team"/>
        </authorList>
    </citation>
    <scope>NUCLEOTIDE SEQUENCE [LARGE SCALE MRNA] (ISOFORM 2)</scope>
    <source>
        <tissue>Brain</tissue>
    </source>
</reference>
<reference key="4">
    <citation type="journal article" date="1999" name="J. Cell Sci.">
        <title>Teneurin-1, a vertebrate homologue of the Drosophila pair-rule gene ten-m, is a neuronal protein with a novel type of heparin-binding domain.</title>
        <authorList>
            <person name="Minet A.D."/>
            <person name="Rubin B.P."/>
            <person name="Tucker R.P."/>
            <person name="Baumgartner S."/>
            <person name="Chiquet-Ehrismann R."/>
        </authorList>
    </citation>
    <scope>TISSUE SPECIFICITY</scope>
</reference>
<reference key="5">
    <citation type="journal article" date="2008" name="Proc. Natl. Acad. Sci. U.S.A.">
        <title>A quantitative atlas of mitotic phosphorylation.</title>
        <authorList>
            <person name="Dephoure N."/>
            <person name="Zhou C."/>
            <person name="Villen J."/>
            <person name="Beausoleil S.A."/>
            <person name="Bakalarski C.E."/>
            <person name="Elledge S.J."/>
            <person name="Gygi S.P."/>
        </authorList>
    </citation>
    <scope>PHOSPHORYLATION [LARGE SCALE ANALYSIS] AT SER-2580</scope>
    <scope>IDENTIFICATION BY MASS SPECTROMETRY [LARGE SCALE ANALYSIS]</scope>
    <source>
        <tissue>Cervix carcinoma</tissue>
    </source>
</reference>
<reference key="6">
    <citation type="journal article" date="2006" name="Science">
        <title>The consensus coding sequences of human breast and colorectal cancers.</title>
        <authorList>
            <person name="Sjoeblom T."/>
            <person name="Jones S."/>
            <person name="Wood L.D."/>
            <person name="Parsons D.W."/>
            <person name="Lin J."/>
            <person name="Barber T.D."/>
            <person name="Mandelker D."/>
            <person name="Leary R.J."/>
            <person name="Ptak J."/>
            <person name="Silliman N."/>
            <person name="Szabo S."/>
            <person name="Buckhaults P."/>
            <person name="Farrell C."/>
            <person name="Meeh P."/>
            <person name="Markowitz S.D."/>
            <person name="Willis J."/>
            <person name="Dawson D."/>
            <person name="Willson J.K.V."/>
            <person name="Gazdar A.F."/>
            <person name="Hartigan J."/>
            <person name="Wu L."/>
            <person name="Liu C."/>
            <person name="Parmigiani G."/>
            <person name="Park B.H."/>
            <person name="Bachman K.E."/>
            <person name="Papadopoulos N."/>
            <person name="Vogelstein B."/>
            <person name="Kinzler K.W."/>
            <person name="Velculescu V.E."/>
        </authorList>
    </citation>
    <scope>VARIANTS [LARGE SCALE ANALYSIS] PHE-342; ILE-1216; VAL-1482; HIS-2235 AND PHE-2396</scope>
</reference>
<reference key="7">
    <citation type="journal article" date="2012" name="Transl. Psychiatry">
        <title>Analysis of the chromosome X exome in patients with autism spectrum disorders identified novel candidate genes, including TMLHE.</title>
        <authorList>
            <person name="Nava C."/>
            <person name="Lamari F."/>
            <person name="Heron D."/>
            <person name="Mignot C."/>
            <person name="Rastetter A."/>
            <person name="Keren B."/>
            <person name="Cohen D."/>
            <person name="Faudet A."/>
            <person name="Bouteiller D."/>
            <person name="Gilleron M."/>
            <person name="Jacquette A."/>
            <person name="Whalen S."/>
            <person name="Afenjar A."/>
            <person name="Perisse D."/>
            <person name="Laurent C."/>
            <person name="Dupuits C."/>
            <person name="Gautier C."/>
            <person name="Gerard M."/>
            <person name="Huguet G."/>
            <person name="Caillet S."/>
            <person name="Leheup B."/>
            <person name="Leboyer M."/>
            <person name="Gillberg C."/>
            <person name="Delorme R."/>
            <person name="Bourgeron T."/>
            <person name="Brice A."/>
            <person name="Depienne C."/>
        </authorList>
    </citation>
    <scope>VARIANT ASP-174</scope>
</reference>
<dbReference type="EMBL" id="AF100772">
    <property type="protein sequence ID" value="AAF04723.1"/>
    <property type="molecule type" value="mRNA"/>
</dbReference>
<dbReference type="EMBL" id="AL022718">
    <property type="status" value="NOT_ANNOTATED_CDS"/>
    <property type="molecule type" value="Genomic_DNA"/>
</dbReference>
<dbReference type="EMBL" id="AL023878">
    <property type="status" value="NOT_ANNOTATED_CDS"/>
    <property type="molecule type" value="Genomic_DNA"/>
</dbReference>
<dbReference type="EMBL" id="AL031075">
    <property type="status" value="NOT_ANNOTATED_CDS"/>
    <property type="molecule type" value="Genomic_DNA"/>
</dbReference>
<dbReference type="EMBL" id="Z81008">
    <property type="status" value="NOT_ANNOTATED_CDS"/>
    <property type="molecule type" value="Genomic_DNA"/>
</dbReference>
<dbReference type="EMBL" id="Z83823">
    <property type="status" value="NOT_ANNOTATED_CDS"/>
    <property type="molecule type" value="Genomic_DNA"/>
</dbReference>
<dbReference type="EMBL" id="Z85995">
    <property type="status" value="NOT_ANNOTATED_CDS"/>
    <property type="molecule type" value="Genomic_DNA"/>
</dbReference>
<dbReference type="EMBL" id="BC140783">
    <property type="protein sequence ID" value="AAI40784.1"/>
    <property type="molecule type" value="mRNA"/>
</dbReference>
<dbReference type="CCDS" id="CCDS14609.1">
    <molecule id="Q9UKZ4-1"/>
</dbReference>
<dbReference type="RefSeq" id="NP_001156750.1">
    <molecule id="Q9UKZ4-2"/>
    <property type="nucleotide sequence ID" value="NM_001163278.2"/>
</dbReference>
<dbReference type="RefSeq" id="NP_001156751.1">
    <property type="nucleotide sequence ID" value="NM_001163279.1"/>
</dbReference>
<dbReference type="RefSeq" id="NP_055068.2">
    <molecule id="Q9UKZ4-1"/>
    <property type="nucleotide sequence ID" value="NM_014253.3"/>
</dbReference>
<dbReference type="RefSeq" id="XP_011529532.1">
    <property type="nucleotide sequence ID" value="XM_011531230.2"/>
</dbReference>
<dbReference type="RefSeq" id="XP_016884703.1">
    <molecule id="Q9UKZ4-1"/>
    <property type="nucleotide sequence ID" value="XM_017029214.3"/>
</dbReference>
<dbReference type="RefSeq" id="XP_054182325.1">
    <molecule id="Q9UKZ4-1"/>
    <property type="nucleotide sequence ID" value="XM_054326350.1"/>
</dbReference>
<dbReference type="SMR" id="Q9UKZ4"/>
<dbReference type="BioGRID" id="115477">
    <property type="interactions" value="22"/>
</dbReference>
<dbReference type="FunCoup" id="Q9UKZ4">
    <property type="interactions" value="468"/>
</dbReference>
<dbReference type="IntAct" id="Q9UKZ4">
    <property type="interactions" value="5"/>
</dbReference>
<dbReference type="MINT" id="Q9UKZ4"/>
<dbReference type="STRING" id="9606.ENSP00000403954"/>
<dbReference type="TCDB" id="9.B.87.1.19">
    <property type="family name" value="the selenoprotein p receptor (selp-receptor) family"/>
</dbReference>
<dbReference type="GlyConnect" id="1795">
    <property type="glycosylation" value="1 N-Linked glycan (1 site)"/>
</dbReference>
<dbReference type="GlyCosmos" id="Q9UKZ4">
    <property type="glycosylation" value="13 sites, 2 glycans"/>
</dbReference>
<dbReference type="GlyGen" id="Q9UKZ4">
    <property type="glycosylation" value="17 sites, 15 N-linked glycans (5 sites), 1 O-linked glycan (2 sites)"/>
</dbReference>
<dbReference type="iPTMnet" id="Q9UKZ4"/>
<dbReference type="PhosphoSitePlus" id="Q9UKZ4"/>
<dbReference type="BioMuta" id="TENM1"/>
<dbReference type="DMDM" id="117949792"/>
<dbReference type="jPOST" id="Q9UKZ4"/>
<dbReference type="MassIVE" id="Q9UKZ4"/>
<dbReference type="PaxDb" id="9606-ENSP00000403954"/>
<dbReference type="PeptideAtlas" id="Q9UKZ4"/>
<dbReference type="ProteomicsDB" id="84918">
    <molecule id="Q9UKZ4-1"/>
</dbReference>
<dbReference type="ProteomicsDB" id="84919">
    <molecule id="Q9UKZ4-2"/>
</dbReference>
<dbReference type="Antibodypedia" id="482">
    <property type="antibodies" value="116 antibodies from 26 providers"/>
</dbReference>
<dbReference type="DNASU" id="10178"/>
<dbReference type="Ensembl" id="ENST00000371130.7">
    <molecule id="Q9UKZ4-1"/>
    <property type="protein sequence ID" value="ENSP00000360171.3"/>
    <property type="gene ID" value="ENSG00000009694.14"/>
</dbReference>
<dbReference type="Ensembl" id="ENST00000422452.4">
    <molecule id="Q9UKZ4-2"/>
    <property type="protein sequence ID" value="ENSP00000403954.4"/>
    <property type="gene ID" value="ENSG00000009694.14"/>
</dbReference>
<dbReference type="GeneID" id="10178"/>
<dbReference type="KEGG" id="hsa:10178"/>
<dbReference type="MANE-Select" id="ENST00000422452.4">
    <molecule id="Q9UKZ4-2"/>
    <property type="protein sequence ID" value="ENSP00000403954.4"/>
    <property type="RefSeq nucleotide sequence ID" value="NM_001163278.2"/>
    <property type="RefSeq protein sequence ID" value="NP_001156750.1"/>
</dbReference>
<dbReference type="UCSC" id="uc004euj.4">
    <molecule id="Q9UKZ4-1"/>
    <property type="organism name" value="human"/>
</dbReference>
<dbReference type="AGR" id="HGNC:8117"/>
<dbReference type="CTD" id="10178"/>
<dbReference type="DisGeNET" id="10178"/>
<dbReference type="GeneCards" id="TENM1"/>
<dbReference type="HGNC" id="HGNC:8117">
    <property type="gene designation" value="TENM1"/>
</dbReference>
<dbReference type="HPA" id="ENSG00000009694">
    <property type="expression patterns" value="Tissue enhanced (brain)"/>
</dbReference>
<dbReference type="MalaCards" id="TENM1"/>
<dbReference type="MIM" id="300588">
    <property type="type" value="gene"/>
</dbReference>
<dbReference type="neXtProt" id="NX_Q9UKZ4"/>
<dbReference type="OpenTargets" id="ENSG00000009694"/>
<dbReference type="Orphanet" id="88620">
    <property type="disease" value="Isolated congenital anosmia"/>
</dbReference>
<dbReference type="PharmGKB" id="PA31904"/>
<dbReference type="VEuPathDB" id="HostDB:ENSG00000009694"/>
<dbReference type="eggNOG" id="KOG4659">
    <property type="taxonomic scope" value="Eukaryota"/>
</dbReference>
<dbReference type="GeneTree" id="ENSGT01030000234566"/>
<dbReference type="HOGENOM" id="CLU_000229_0_0_1"/>
<dbReference type="InParanoid" id="Q9UKZ4"/>
<dbReference type="OMA" id="DNMGRMI"/>
<dbReference type="OrthoDB" id="442731at2759"/>
<dbReference type="PAN-GO" id="Q9UKZ4">
    <property type="GO annotations" value="6 GO annotations based on evolutionary models"/>
</dbReference>
<dbReference type="PhylomeDB" id="Q9UKZ4"/>
<dbReference type="TreeFam" id="TF316833"/>
<dbReference type="PathwayCommons" id="Q9UKZ4"/>
<dbReference type="SignaLink" id="Q9UKZ4"/>
<dbReference type="BioGRID-ORCS" id="10178">
    <property type="hits" value="8 hits in 778 CRISPR screens"/>
</dbReference>
<dbReference type="ChiTaRS" id="TENM1">
    <property type="organism name" value="human"/>
</dbReference>
<dbReference type="GeneWiki" id="ODZ1"/>
<dbReference type="GenomeRNAi" id="10178"/>
<dbReference type="Pharos" id="Q9UKZ4">
    <property type="development level" value="Tbio"/>
</dbReference>
<dbReference type="PRO" id="PR:Q9UKZ4"/>
<dbReference type="Proteomes" id="UP000005640">
    <property type="component" value="Chromosome X"/>
</dbReference>
<dbReference type="RNAct" id="Q9UKZ4">
    <property type="molecule type" value="protein"/>
</dbReference>
<dbReference type="Bgee" id="ENSG00000009694">
    <property type="expression patterns" value="Expressed in cerebellar vermis and 155 other cell types or tissues"/>
</dbReference>
<dbReference type="GO" id="GO:0005737">
    <property type="term" value="C:cytoplasm"/>
    <property type="evidence" value="ECO:0000250"/>
    <property type="project" value="UniProtKB"/>
</dbReference>
<dbReference type="GO" id="GO:0005856">
    <property type="term" value="C:cytoskeleton"/>
    <property type="evidence" value="ECO:0000250"/>
    <property type="project" value="UniProtKB"/>
</dbReference>
<dbReference type="GO" id="GO:0005783">
    <property type="term" value="C:endoplasmic reticulum"/>
    <property type="evidence" value="ECO:0000250"/>
    <property type="project" value="UniProtKB"/>
</dbReference>
<dbReference type="GO" id="GO:0005576">
    <property type="term" value="C:extracellular region"/>
    <property type="evidence" value="ECO:0000304"/>
    <property type="project" value="ProtInc"/>
</dbReference>
<dbReference type="GO" id="GO:0005794">
    <property type="term" value="C:Golgi apparatus"/>
    <property type="evidence" value="ECO:0000250"/>
    <property type="project" value="UniProtKB"/>
</dbReference>
<dbReference type="GO" id="GO:0043005">
    <property type="term" value="C:neuron projection"/>
    <property type="evidence" value="ECO:0000318"/>
    <property type="project" value="GO_Central"/>
</dbReference>
<dbReference type="GO" id="GO:0016363">
    <property type="term" value="C:nuclear matrix"/>
    <property type="evidence" value="ECO:0000250"/>
    <property type="project" value="UniProtKB"/>
</dbReference>
<dbReference type="GO" id="GO:0016607">
    <property type="term" value="C:nuclear speck"/>
    <property type="evidence" value="ECO:0000250"/>
    <property type="project" value="UniProtKB"/>
</dbReference>
<dbReference type="GO" id="GO:0005634">
    <property type="term" value="C:nucleus"/>
    <property type="evidence" value="ECO:0000250"/>
    <property type="project" value="UniProtKB"/>
</dbReference>
<dbReference type="GO" id="GO:0048471">
    <property type="term" value="C:perinuclear region of cytoplasm"/>
    <property type="evidence" value="ECO:0000250"/>
    <property type="project" value="UniProtKB"/>
</dbReference>
<dbReference type="GO" id="GO:0005886">
    <property type="term" value="C:plasma membrane"/>
    <property type="evidence" value="ECO:0000250"/>
    <property type="project" value="UniProtKB"/>
</dbReference>
<dbReference type="GO" id="GO:0050839">
    <property type="term" value="F:cell adhesion molecule binding"/>
    <property type="evidence" value="ECO:0000318"/>
    <property type="project" value="GO_Central"/>
</dbReference>
<dbReference type="GO" id="GO:0008201">
    <property type="term" value="F:heparin binding"/>
    <property type="evidence" value="ECO:0000304"/>
    <property type="project" value="ProtInc"/>
</dbReference>
<dbReference type="GO" id="GO:0046982">
    <property type="term" value="F:protein heterodimerization activity"/>
    <property type="evidence" value="ECO:0000250"/>
    <property type="project" value="UniProtKB"/>
</dbReference>
<dbReference type="GO" id="GO:0042803">
    <property type="term" value="F:protein homodimerization activity"/>
    <property type="evidence" value="ECO:0000250"/>
    <property type="project" value="UniProtKB"/>
</dbReference>
<dbReference type="GO" id="GO:0006955">
    <property type="term" value="P:immune response"/>
    <property type="evidence" value="ECO:0000304"/>
    <property type="project" value="ProtInc"/>
</dbReference>
<dbReference type="GO" id="GO:0008285">
    <property type="term" value="P:negative regulation of cell population proliferation"/>
    <property type="evidence" value="ECO:0000304"/>
    <property type="project" value="ProtInc"/>
</dbReference>
<dbReference type="GO" id="GO:0007399">
    <property type="term" value="P:nervous system development"/>
    <property type="evidence" value="ECO:0000304"/>
    <property type="project" value="ProtInc"/>
</dbReference>
<dbReference type="GO" id="GO:0048666">
    <property type="term" value="P:neuron development"/>
    <property type="evidence" value="ECO:0000318"/>
    <property type="project" value="GO_Central"/>
</dbReference>
<dbReference type="GO" id="GO:0007218">
    <property type="term" value="P:neuropeptide signaling pathway"/>
    <property type="evidence" value="ECO:0007669"/>
    <property type="project" value="UniProtKB-KW"/>
</dbReference>
<dbReference type="GO" id="GO:0030838">
    <property type="term" value="P:positive regulation of actin filament polymerization"/>
    <property type="evidence" value="ECO:0000250"/>
    <property type="project" value="UniProtKB"/>
</dbReference>
<dbReference type="GO" id="GO:0051491">
    <property type="term" value="P:positive regulation of filopodium assembly"/>
    <property type="evidence" value="ECO:0000250"/>
    <property type="project" value="UniProtKB"/>
</dbReference>
<dbReference type="GO" id="GO:0090316">
    <property type="term" value="P:positive regulation of intracellular protein transport"/>
    <property type="evidence" value="ECO:0000250"/>
    <property type="project" value="UniProtKB"/>
</dbReference>
<dbReference type="GO" id="GO:0043406">
    <property type="term" value="P:positive regulation of MAP kinase activity"/>
    <property type="evidence" value="ECO:0000250"/>
    <property type="project" value="UniProtKB"/>
</dbReference>
<dbReference type="GO" id="GO:0033138">
    <property type="term" value="P:positive regulation of peptidyl-serine phosphorylation"/>
    <property type="evidence" value="ECO:0000250"/>
    <property type="project" value="UniProtKB"/>
</dbReference>
<dbReference type="GO" id="GO:0006359">
    <property type="term" value="P:regulation of transcription by RNA polymerase III"/>
    <property type="evidence" value="ECO:0000250"/>
    <property type="project" value="UniProtKB"/>
</dbReference>
<dbReference type="CDD" id="cd00054">
    <property type="entry name" value="EGF_CA"/>
    <property type="match status" value="1"/>
</dbReference>
<dbReference type="FunFam" id="2.180.10.10:FF:000019">
    <property type="entry name" value="Teneurin transmembrane protein 1"/>
    <property type="match status" value="1"/>
</dbReference>
<dbReference type="FunFam" id="2.10.25.10:FF:000016">
    <property type="entry name" value="Teneurin transmembrane protein 2"/>
    <property type="match status" value="1"/>
</dbReference>
<dbReference type="FunFam" id="2.10.25.10:FF:000021">
    <property type="entry name" value="Teneurin transmembrane protein 2"/>
    <property type="match status" value="2"/>
</dbReference>
<dbReference type="FunFam" id="2.10.25.10:FF:000013">
    <property type="entry name" value="Teneurin transmembrane protein 4"/>
    <property type="match status" value="1"/>
</dbReference>
<dbReference type="FunFam" id="2.120.10.30:FF:000005">
    <property type="entry name" value="Teneurin transmembrane protein 4"/>
    <property type="match status" value="1"/>
</dbReference>
<dbReference type="FunFam" id="2.120.10.30:FF:000006">
    <property type="entry name" value="Teneurin transmembrane protein 4"/>
    <property type="match status" value="1"/>
</dbReference>
<dbReference type="FunFam" id="2.10.25.10:FF:000169">
    <property type="entry name" value="teneurin-1 isoform X1"/>
    <property type="match status" value="1"/>
</dbReference>
<dbReference type="Gene3D" id="2.60.120.260">
    <property type="entry name" value="Galactose-binding domain-like"/>
    <property type="match status" value="1"/>
</dbReference>
<dbReference type="Gene3D" id="2.10.25.10">
    <property type="entry name" value="Laminin"/>
    <property type="match status" value="5"/>
</dbReference>
<dbReference type="Gene3D" id="2.180.10.10">
    <property type="entry name" value="RHS repeat-associated core"/>
    <property type="match status" value="1"/>
</dbReference>
<dbReference type="Gene3D" id="2.120.10.30">
    <property type="entry name" value="TolB, C-terminal domain"/>
    <property type="match status" value="2"/>
</dbReference>
<dbReference type="InterPro" id="IPR011042">
    <property type="entry name" value="6-blade_b-propeller_TolB-like"/>
</dbReference>
<dbReference type="InterPro" id="IPR000742">
    <property type="entry name" value="EGF-like_dom"/>
</dbReference>
<dbReference type="InterPro" id="IPR009471">
    <property type="entry name" value="Ten_N"/>
</dbReference>
<dbReference type="InterPro" id="IPR056822">
    <property type="entry name" value="TEN_NHL"/>
</dbReference>
<dbReference type="InterPro" id="IPR056820">
    <property type="entry name" value="TEN_TTR-like"/>
</dbReference>
<dbReference type="InterPro" id="IPR056823">
    <property type="entry name" value="TEN_YD-shell"/>
</dbReference>
<dbReference type="InterPro" id="IPR051216">
    <property type="entry name" value="Teneurin"/>
</dbReference>
<dbReference type="InterPro" id="IPR028916">
    <property type="entry name" value="Tox-GHH_dom"/>
</dbReference>
<dbReference type="InterPro" id="IPR006530">
    <property type="entry name" value="YD"/>
</dbReference>
<dbReference type="NCBIfam" id="TIGR01643">
    <property type="entry name" value="YD_repeat_2x"/>
    <property type="match status" value="3"/>
</dbReference>
<dbReference type="PANTHER" id="PTHR11219">
    <property type="entry name" value="TENEURIN AND N-ACETYLGLUCOSAMINE-1-PHOSPHODIESTER ALPHA-N-ACETYLGLUCOSAMINIDASE"/>
    <property type="match status" value="1"/>
</dbReference>
<dbReference type="PANTHER" id="PTHR11219:SF7">
    <property type="entry name" value="TENEURIN-1"/>
    <property type="match status" value="1"/>
</dbReference>
<dbReference type="Pfam" id="PF25024">
    <property type="entry name" value="EGF_TEN"/>
    <property type="match status" value="1"/>
</dbReference>
<dbReference type="Pfam" id="PF24329">
    <property type="entry name" value="FN-plug_TEN1-4"/>
    <property type="match status" value="1"/>
</dbReference>
<dbReference type="Pfam" id="PF23093">
    <property type="entry name" value="GBD_Tenm3"/>
    <property type="match status" value="1"/>
</dbReference>
<dbReference type="Pfam" id="PF06484">
    <property type="entry name" value="Ten_N"/>
    <property type="match status" value="2"/>
</dbReference>
<dbReference type="Pfam" id="PF25021">
    <property type="entry name" value="TEN_NHL"/>
    <property type="match status" value="1"/>
</dbReference>
<dbReference type="Pfam" id="PF25023">
    <property type="entry name" value="TEN_YD-shell"/>
    <property type="match status" value="1"/>
</dbReference>
<dbReference type="Pfam" id="PF23538">
    <property type="entry name" value="Teneurin_ABD"/>
    <property type="match status" value="1"/>
</dbReference>
<dbReference type="Pfam" id="PF15636">
    <property type="entry name" value="Tox-GHH"/>
    <property type="match status" value="1"/>
</dbReference>
<dbReference type="Pfam" id="PF25020">
    <property type="entry name" value="TTR_TEN1-4"/>
    <property type="match status" value="1"/>
</dbReference>
<dbReference type="SMART" id="SM00181">
    <property type="entry name" value="EGF"/>
    <property type="match status" value="8"/>
</dbReference>
<dbReference type="SUPFAM" id="SSF63829">
    <property type="entry name" value="Calcium-dependent phosphotriesterase"/>
    <property type="match status" value="1"/>
</dbReference>
<dbReference type="SUPFAM" id="SSF57196">
    <property type="entry name" value="EGF/Laminin"/>
    <property type="match status" value="1"/>
</dbReference>
<dbReference type="SUPFAM" id="SSF101898">
    <property type="entry name" value="NHL repeat"/>
    <property type="match status" value="1"/>
</dbReference>
<dbReference type="PROSITE" id="PS00022">
    <property type="entry name" value="EGF_1"/>
    <property type="match status" value="8"/>
</dbReference>
<dbReference type="PROSITE" id="PS01186">
    <property type="entry name" value="EGF_2"/>
    <property type="match status" value="7"/>
</dbReference>
<dbReference type="PROSITE" id="PS50026">
    <property type="entry name" value="EGF_3"/>
    <property type="match status" value="5"/>
</dbReference>
<dbReference type="PROSITE" id="PS51361">
    <property type="entry name" value="TENEURIN_N"/>
    <property type="match status" value="1"/>
</dbReference>